<name>RSMH_CORGL</name>
<organism>
    <name type="scientific">Corynebacterium glutamicum (strain ATCC 13032 / DSM 20300 / JCM 1318 / BCRC 11384 / CCUG 27702 / LMG 3730 / NBRC 12168 / NCIMB 10025 / NRRL B-2784 / 534)</name>
    <dbReference type="NCBI Taxonomy" id="196627"/>
    <lineage>
        <taxon>Bacteria</taxon>
        <taxon>Bacillati</taxon>
        <taxon>Actinomycetota</taxon>
        <taxon>Actinomycetes</taxon>
        <taxon>Mycobacteriales</taxon>
        <taxon>Corynebacteriaceae</taxon>
        <taxon>Corynebacterium</taxon>
    </lineage>
</organism>
<evidence type="ECO:0000255" key="1">
    <source>
        <dbReference type="HAMAP-Rule" id="MF_01007"/>
    </source>
</evidence>
<protein>
    <recommendedName>
        <fullName evidence="1">Ribosomal RNA small subunit methyltransferase H</fullName>
        <ecNumber evidence="1">2.1.1.199</ecNumber>
    </recommendedName>
    <alternativeName>
        <fullName evidence="1">16S rRNA m(4)C1402 methyltransferase</fullName>
    </alternativeName>
    <alternativeName>
        <fullName evidence="1">rRNA (cytosine-N(4)-)-methyltransferase RsmH</fullName>
    </alternativeName>
</protein>
<comment type="function">
    <text evidence="1">Specifically methylates the N4 position of cytidine in position 1402 (C1402) of 16S rRNA.</text>
</comment>
<comment type="catalytic activity">
    <reaction evidence="1">
        <text>cytidine(1402) in 16S rRNA + S-adenosyl-L-methionine = N(4)-methylcytidine(1402) in 16S rRNA + S-adenosyl-L-homocysteine + H(+)</text>
        <dbReference type="Rhea" id="RHEA:42928"/>
        <dbReference type="Rhea" id="RHEA-COMP:10286"/>
        <dbReference type="Rhea" id="RHEA-COMP:10287"/>
        <dbReference type="ChEBI" id="CHEBI:15378"/>
        <dbReference type="ChEBI" id="CHEBI:57856"/>
        <dbReference type="ChEBI" id="CHEBI:59789"/>
        <dbReference type="ChEBI" id="CHEBI:74506"/>
        <dbReference type="ChEBI" id="CHEBI:82748"/>
        <dbReference type="EC" id="2.1.1.199"/>
    </reaction>
</comment>
<comment type="subcellular location">
    <subcellularLocation>
        <location evidence="1">Cytoplasm</location>
    </subcellularLocation>
</comment>
<comment type="similarity">
    <text evidence="1">Belongs to the methyltransferase superfamily. RsmH family.</text>
</comment>
<accession>Q8NNM7</accession>
<keyword id="KW-0963">Cytoplasm</keyword>
<keyword id="KW-0489">Methyltransferase</keyword>
<keyword id="KW-1185">Reference proteome</keyword>
<keyword id="KW-0698">rRNA processing</keyword>
<keyword id="KW-0949">S-adenosyl-L-methionine</keyword>
<keyword id="KW-0808">Transferase</keyword>
<feature type="chain" id="PRO_0000108615" description="Ribosomal RNA small subunit methyltransferase H">
    <location>
        <begin position="1"/>
        <end position="337"/>
    </location>
</feature>
<feature type="binding site" evidence="1">
    <location>
        <begin position="45"/>
        <end position="47"/>
    </location>
    <ligand>
        <name>S-adenosyl-L-methionine</name>
        <dbReference type="ChEBI" id="CHEBI:59789"/>
    </ligand>
</feature>
<feature type="binding site" evidence="1">
    <location>
        <position position="64"/>
    </location>
    <ligand>
        <name>S-adenosyl-L-methionine</name>
        <dbReference type="ChEBI" id="CHEBI:59789"/>
    </ligand>
</feature>
<feature type="binding site" evidence="1">
    <location>
        <position position="91"/>
    </location>
    <ligand>
        <name>S-adenosyl-L-methionine</name>
        <dbReference type="ChEBI" id="CHEBI:59789"/>
    </ligand>
</feature>
<feature type="binding site" evidence="1">
    <location>
        <position position="120"/>
    </location>
    <ligand>
        <name>S-adenosyl-L-methionine</name>
        <dbReference type="ChEBI" id="CHEBI:59789"/>
    </ligand>
</feature>
<feature type="binding site" evidence="1">
    <location>
        <position position="127"/>
    </location>
    <ligand>
        <name>S-adenosyl-L-methionine</name>
        <dbReference type="ChEBI" id="CHEBI:59789"/>
    </ligand>
</feature>
<sequence length="337" mass="36809">MEDFSLDGNHGHVPVMRDRMAALIAEHVEALGENAVIVDATLGAGGHAEFFLNTFPKARLIGLDRDQNALRDARARLAPFGERFIGVQTRFDGLREVLESVEGDIIDLAREHGIAGALFDLGVSSMQLDQVERGFAYRTDAPLDMRMDATQGITAADILNTYSHGDIARILKTYGDERFAGKIASAVLKEREKEPFTTSARLVELLYDAIPAATRRTGGHPAKRTFQALRVEVNNELDSLKNVLPQITDALNVGGRAVFMSYQSHEDKLVKKFFTDLTTSKTPPGLPVDLPGTAPQFKQVTRGAETASEAEIEENPRAAPVKVRAIERIGNNSGDLS</sequence>
<dbReference type="EC" id="2.1.1.199" evidence="1"/>
<dbReference type="EMBL" id="BA000036">
    <property type="protein sequence ID" value="BAB99559.1"/>
    <property type="molecule type" value="Genomic_DNA"/>
</dbReference>
<dbReference type="EMBL" id="BX927154">
    <property type="protein sequence ID" value="CAF20506.1"/>
    <property type="molecule type" value="Genomic_DNA"/>
</dbReference>
<dbReference type="RefSeq" id="NP_601368.1">
    <property type="nucleotide sequence ID" value="NC_003450.3"/>
</dbReference>
<dbReference type="RefSeq" id="WP_003860361.1">
    <property type="nucleotide sequence ID" value="NC_006958.1"/>
</dbReference>
<dbReference type="SMR" id="Q8NNM7"/>
<dbReference type="STRING" id="196627.cg2377"/>
<dbReference type="GeneID" id="1020118"/>
<dbReference type="KEGG" id="cgb:cg2377"/>
<dbReference type="KEGG" id="cgl:Cgl2166"/>
<dbReference type="PATRIC" id="fig|196627.13.peg.2104"/>
<dbReference type="eggNOG" id="COG0275">
    <property type="taxonomic scope" value="Bacteria"/>
</dbReference>
<dbReference type="HOGENOM" id="CLU_038422_0_0_11"/>
<dbReference type="OrthoDB" id="9806637at2"/>
<dbReference type="BioCyc" id="CORYNE:G18NG-11758-MONOMER"/>
<dbReference type="Proteomes" id="UP000000582">
    <property type="component" value="Chromosome"/>
</dbReference>
<dbReference type="Proteomes" id="UP000001009">
    <property type="component" value="Chromosome"/>
</dbReference>
<dbReference type="GO" id="GO:0005737">
    <property type="term" value="C:cytoplasm"/>
    <property type="evidence" value="ECO:0007669"/>
    <property type="project" value="UniProtKB-SubCell"/>
</dbReference>
<dbReference type="GO" id="GO:0071424">
    <property type="term" value="F:rRNA (cytosine-N4-)-methyltransferase activity"/>
    <property type="evidence" value="ECO:0007669"/>
    <property type="project" value="UniProtKB-UniRule"/>
</dbReference>
<dbReference type="GO" id="GO:0070475">
    <property type="term" value="P:rRNA base methylation"/>
    <property type="evidence" value="ECO:0007669"/>
    <property type="project" value="UniProtKB-UniRule"/>
</dbReference>
<dbReference type="FunFam" id="1.10.150.170:FF:000001">
    <property type="entry name" value="Ribosomal RNA small subunit methyltransferase H"/>
    <property type="match status" value="1"/>
</dbReference>
<dbReference type="Gene3D" id="1.10.150.170">
    <property type="entry name" value="Putative methyltransferase TM0872, insert domain"/>
    <property type="match status" value="1"/>
</dbReference>
<dbReference type="Gene3D" id="3.40.50.150">
    <property type="entry name" value="Vaccinia Virus protein VP39"/>
    <property type="match status" value="1"/>
</dbReference>
<dbReference type="HAMAP" id="MF_01007">
    <property type="entry name" value="16SrRNA_methyltr_H"/>
    <property type="match status" value="1"/>
</dbReference>
<dbReference type="InterPro" id="IPR002903">
    <property type="entry name" value="RsmH"/>
</dbReference>
<dbReference type="InterPro" id="IPR023397">
    <property type="entry name" value="SAM-dep_MeTrfase_MraW_recog"/>
</dbReference>
<dbReference type="InterPro" id="IPR029063">
    <property type="entry name" value="SAM-dependent_MTases_sf"/>
</dbReference>
<dbReference type="NCBIfam" id="TIGR00006">
    <property type="entry name" value="16S rRNA (cytosine(1402)-N(4))-methyltransferase RsmH"/>
    <property type="match status" value="1"/>
</dbReference>
<dbReference type="PANTHER" id="PTHR11265:SF0">
    <property type="entry name" value="12S RRNA N4-METHYLCYTIDINE METHYLTRANSFERASE"/>
    <property type="match status" value="1"/>
</dbReference>
<dbReference type="PANTHER" id="PTHR11265">
    <property type="entry name" value="S-ADENOSYL-METHYLTRANSFERASE MRAW"/>
    <property type="match status" value="1"/>
</dbReference>
<dbReference type="Pfam" id="PF01795">
    <property type="entry name" value="Methyltransf_5"/>
    <property type="match status" value="1"/>
</dbReference>
<dbReference type="PIRSF" id="PIRSF004486">
    <property type="entry name" value="MraW"/>
    <property type="match status" value="1"/>
</dbReference>
<dbReference type="SUPFAM" id="SSF81799">
    <property type="entry name" value="Putative methyltransferase TM0872, insert domain"/>
    <property type="match status" value="1"/>
</dbReference>
<dbReference type="SUPFAM" id="SSF53335">
    <property type="entry name" value="S-adenosyl-L-methionine-dependent methyltransferases"/>
    <property type="match status" value="1"/>
</dbReference>
<proteinExistence type="inferred from homology"/>
<reference key="1">
    <citation type="journal article" date="2003" name="Appl. Microbiol. Biotechnol.">
        <title>The Corynebacterium glutamicum genome: features and impacts on biotechnological processes.</title>
        <authorList>
            <person name="Ikeda M."/>
            <person name="Nakagawa S."/>
        </authorList>
    </citation>
    <scope>NUCLEOTIDE SEQUENCE [LARGE SCALE GENOMIC DNA]</scope>
    <source>
        <strain>ATCC 13032 / DSM 20300 / JCM 1318 / BCRC 11384 / CCUG 27702 / LMG 3730 / NBRC 12168 / NCIMB 10025 / NRRL B-2784 / 534</strain>
    </source>
</reference>
<reference key="2">
    <citation type="journal article" date="2003" name="J. Biotechnol.">
        <title>The complete Corynebacterium glutamicum ATCC 13032 genome sequence and its impact on the production of L-aspartate-derived amino acids and vitamins.</title>
        <authorList>
            <person name="Kalinowski J."/>
            <person name="Bathe B."/>
            <person name="Bartels D."/>
            <person name="Bischoff N."/>
            <person name="Bott M."/>
            <person name="Burkovski A."/>
            <person name="Dusch N."/>
            <person name="Eggeling L."/>
            <person name="Eikmanns B.J."/>
            <person name="Gaigalat L."/>
            <person name="Goesmann A."/>
            <person name="Hartmann M."/>
            <person name="Huthmacher K."/>
            <person name="Kraemer R."/>
            <person name="Linke B."/>
            <person name="McHardy A.C."/>
            <person name="Meyer F."/>
            <person name="Moeckel B."/>
            <person name="Pfefferle W."/>
            <person name="Puehler A."/>
            <person name="Rey D.A."/>
            <person name="Rueckert C."/>
            <person name="Rupp O."/>
            <person name="Sahm H."/>
            <person name="Wendisch V.F."/>
            <person name="Wiegraebe I."/>
            <person name="Tauch A."/>
        </authorList>
    </citation>
    <scope>NUCLEOTIDE SEQUENCE [LARGE SCALE GENOMIC DNA]</scope>
    <source>
        <strain>ATCC 13032 / DSM 20300 / JCM 1318 / BCRC 11384 / CCUG 27702 / LMG 3730 / NBRC 12168 / NCIMB 10025 / NRRL B-2784 / 534</strain>
    </source>
</reference>
<gene>
    <name evidence="1" type="primary">rsmH</name>
    <name type="synonym">mraW</name>
    <name type="ordered locus">Cgl2166</name>
    <name type="ordered locus">cg2377</name>
</gene>